<feature type="chain" id="PRO_0000078593" description="Chaperone protein DnaK">
    <location>
        <begin position="1"/>
        <end position="636"/>
    </location>
</feature>
<feature type="region of interest" description="Disordered" evidence="2">
    <location>
        <begin position="603"/>
        <end position="636"/>
    </location>
</feature>
<feature type="modified residue" description="Phosphothreonine; by autocatalysis" evidence="1">
    <location>
        <position position="199"/>
    </location>
</feature>
<comment type="function">
    <text evidence="1">Acts as a chaperone.</text>
</comment>
<comment type="induction">
    <text evidence="1">By stress conditions e.g. heat shock.</text>
</comment>
<comment type="similarity">
    <text evidence="1">Belongs to the heat shock protein 70 family.</text>
</comment>
<gene>
    <name evidence="1" type="primary">dnaK</name>
    <name type="ordered locus">YPO0468</name>
    <name type="ordered locus">y3706</name>
    <name type="ordered locus">YP_3712</name>
</gene>
<name>DNAK_YERPE</name>
<keyword id="KW-0067">ATP-binding</keyword>
<keyword id="KW-0143">Chaperone</keyword>
<keyword id="KW-0547">Nucleotide-binding</keyword>
<keyword id="KW-0597">Phosphoprotein</keyword>
<keyword id="KW-1185">Reference proteome</keyword>
<keyword id="KW-0346">Stress response</keyword>
<reference key="1">
    <citation type="journal article" date="2001" name="Nature">
        <title>Genome sequence of Yersinia pestis, the causative agent of plague.</title>
        <authorList>
            <person name="Parkhill J."/>
            <person name="Wren B.W."/>
            <person name="Thomson N.R."/>
            <person name="Titball R.W."/>
            <person name="Holden M.T.G."/>
            <person name="Prentice M.B."/>
            <person name="Sebaihia M."/>
            <person name="James K.D."/>
            <person name="Churcher C.M."/>
            <person name="Mungall K.L."/>
            <person name="Baker S."/>
            <person name="Basham D."/>
            <person name="Bentley S.D."/>
            <person name="Brooks K."/>
            <person name="Cerdeno-Tarraga A.-M."/>
            <person name="Chillingworth T."/>
            <person name="Cronin A."/>
            <person name="Davies R.M."/>
            <person name="Davis P."/>
            <person name="Dougan G."/>
            <person name="Feltwell T."/>
            <person name="Hamlin N."/>
            <person name="Holroyd S."/>
            <person name="Jagels K."/>
            <person name="Karlyshev A.V."/>
            <person name="Leather S."/>
            <person name="Moule S."/>
            <person name="Oyston P.C.F."/>
            <person name="Quail M.A."/>
            <person name="Rutherford K.M."/>
            <person name="Simmonds M."/>
            <person name="Skelton J."/>
            <person name="Stevens K."/>
            <person name="Whitehead S."/>
            <person name="Barrell B.G."/>
        </authorList>
    </citation>
    <scope>NUCLEOTIDE SEQUENCE [LARGE SCALE GENOMIC DNA]</scope>
    <source>
        <strain>CO-92 / Biovar Orientalis</strain>
    </source>
</reference>
<reference key="2">
    <citation type="journal article" date="2002" name="J. Bacteriol.">
        <title>Genome sequence of Yersinia pestis KIM.</title>
        <authorList>
            <person name="Deng W."/>
            <person name="Burland V."/>
            <person name="Plunkett G. III"/>
            <person name="Boutin A."/>
            <person name="Mayhew G.F."/>
            <person name="Liss P."/>
            <person name="Perna N.T."/>
            <person name="Rose D.J."/>
            <person name="Mau B."/>
            <person name="Zhou S."/>
            <person name="Schwartz D.C."/>
            <person name="Fetherston J.D."/>
            <person name="Lindler L.E."/>
            <person name="Brubaker R.R."/>
            <person name="Plano G.V."/>
            <person name="Straley S.C."/>
            <person name="McDonough K.A."/>
            <person name="Nilles M.L."/>
            <person name="Matson J.S."/>
            <person name="Blattner F.R."/>
            <person name="Perry R.D."/>
        </authorList>
    </citation>
    <scope>NUCLEOTIDE SEQUENCE [LARGE SCALE GENOMIC DNA]</scope>
    <source>
        <strain>KIM10+ / Biovar Mediaevalis</strain>
    </source>
</reference>
<reference key="3">
    <citation type="journal article" date="2004" name="DNA Res.">
        <title>Complete genome sequence of Yersinia pestis strain 91001, an isolate avirulent to humans.</title>
        <authorList>
            <person name="Song Y."/>
            <person name="Tong Z."/>
            <person name="Wang J."/>
            <person name="Wang L."/>
            <person name="Guo Z."/>
            <person name="Han Y."/>
            <person name="Zhang J."/>
            <person name="Pei D."/>
            <person name="Zhou D."/>
            <person name="Qin H."/>
            <person name="Pang X."/>
            <person name="Han Y."/>
            <person name="Zhai J."/>
            <person name="Li M."/>
            <person name="Cui B."/>
            <person name="Qi Z."/>
            <person name="Jin L."/>
            <person name="Dai R."/>
            <person name="Chen F."/>
            <person name="Li S."/>
            <person name="Ye C."/>
            <person name="Du Z."/>
            <person name="Lin W."/>
            <person name="Wang J."/>
            <person name="Yu J."/>
            <person name="Yang H."/>
            <person name="Wang J."/>
            <person name="Huang P."/>
            <person name="Yang R."/>
        </authorList>
    </citation>
    <scope>NUCLEOTIDE SEQUENCE [LARGE SCALE GENOMIC DNA]</scope>
    <source>
        <strain>91001 / Biovar Mediaevalis</strain>
    </source>
</reference>
<dbReference type="EMBL" id="AL590842">
    <property type="protein sequence ID" value="CAL19147.1"/>
    <property type="molecule type" value="Genomic_DNA"/>
</dbReference>
<dbReference type="EMBL" id="AE009952">
    <property type="protein sequence ID" value="AAM87254.1"/>
    <property type="molecule type" value="Genomic_DNA"/>
</dbReference>
<dbReference type="EMBL" id="AE017042">
    <property type="protein sequence ID" value="AAS63860.1"/>
    <property type="molecule type" value="Genomic_DNA"/>
</dbReference>
<dbReference type="PIR" id="AI0057">
    <property type="entry name" value="AI0057"/>
</dbReference>
<dbReference type="RefSeq" id="WP_002209248.1">
    <property type="nucleotide sequence ID" value="NZ_WUCM01000002.1"/>
</dbReference>
<dbReference type="RefSeq" id="YP_002345540.1">
    <property type="nucleotide sequence ID" value="NC_003143.1"/>
</dbReference>
<dbReference type="SMR" id="Q8ZIM7"/>
<dbReference type="STRING" id="214092.YPO0468"/>
<dbReference type="PaxDb" id="214092-YPO0468"/>
<dbReference type="DNASU" id="1148653"/>
<dbReference type="EnsemblBacteria" id="AAS63860">
    <property type="protein sequence ID" value="AAS63860"/>
    <property type="gene ID" value="YP_3712"/>
</dbReference>
<dbReference type="GeneID" id="57974141"/>
<dbReference type="KEGG" id="ype:YPO0468"/>
<dbReference type="KEGG" id="ypk:y3706"/>
<dbReference type="KEGG" id="ypm:YP_3712"/>
<dbReference type="PATRIC" id="fig|214092.21.peg.715"/>
<dbReference type="eggNOG" id="COG0443">
    <property type="taxonomic scope" value="Bacteria"/>
</dbReference>
<dbReference type="HOGENOM" id="CLU_005965_2_1_6"/>
<dbReference type="OMA" id="MGTDWKI"/>
<dbReference type="OrthoDB" id="9766019at2"/>
<dbReference type="Proteomes" id="UP000000815">
    <property type="component" value="Chromosome"/>
</dbReference>
<dbReference type="Proteomes" id="UP000001019">
    <property type="component" value="Chromosome"/>
</dbReference>
<dbReference type="Proteomes" id="UP000002490">
    <property type="component" value="Chromosome"/>
</dbReference>
<dbReference type="GO" id="GO:0005829">
    <property type="term" value="C:cytosol"/>
    <property type="evidence" value="ECO:0000318"/>
    <property type="project" value="GO_Central"/>
</dbReference>
<dbReference type="GO" id="GO:0005524">
    <property type="term" value="F:ATP binding"/>
    <property type="evidence" value="ECO:0007669"/>
    <property type="project" value="UniProtKB-UniRule"/>
</dbReference>
<dbReference type="GO" id="GO:0016887">
    <property type="term" value="F:ATP hydrolysis activity"/>
    <property type="evidence" value="ECO:0000318"/>
    <property type="project" value="GO_Central"/>
</dbReference>
<dbReference type="GO" id="GO:0140662">
    <property type="term" value="F:ATP-dependent protein folding chaperone"/>
    <property type="evidence" value="ECO:0007669"/>
    <property type="project" value="InterPro"/>
</dbReference>
<dbReference type="GO" id="GO:0031072">
    <property type="term" value="F:heat shock protein binding"/>
    <property type="evidence" value="ECO:0000318"/>
    <property type="project" value="GO_Central"/>
</dbReference>
<dbReference type="GO" id="GO:0044183">
    <property type="term" value="F:protein folding chaperone"/>
    <property type="evidence" value="ECO:0000318"/>
    <property type="project" value="GO_Central"/>
</dbReference>
<dbReference type="GO" id="GO:0051082">
    <property type="term" value="F:unfolded protein binding"/>
    <property type="evidence" value="ECO:0007669"/>
    <property type="project" value="InterPro"/>
</dbReference>
<dbReference type="GO" id="GO:0051085">
    <property type="term" value="P:chaperone cofactor-dependent protein refolding"/>
    <property type="evidence" value="ECO:0000318"/>
    <property type="project" value="GO_Central"/>
</dbReference>
<dbReference type="GO" id="GO:0042026">
    <property type="term" value="P:protein refolding"/>
    <property type="evidence" value="ECO:0000318"/>
    <property type="project" value="GO_Central"/>
</dbReference>
<dbReference type="CDD" id="cd10234">
    <property type="entry name" value="ASKHA_NBD_HSP70_DnaK-like"/>
    <property type="match status" value="1"/>
</dbReference>
<dbReference type="FunFam" id="2.60.34.10:FF:000014">
    <property type="entry name" value="Chaperone protein DnaK HSP70"/>
    <property type="match status" value="1"/>
</dbReference>
<dbReference type="FunFam" id="3.30.30.30:FF:000003">
    <property type="entry name" value="Heat shock protein 9"/>
    <property type="match status" value="1"/>
</dbReference>
<dbReference type="FunFam" id="1.20.1270.10:FF:000001">
    <property type="entry name" value="Molecular chaperone DnaK"/>
    <property type="match status" value="1"/>
</dbReference>
<dbReference type="FunFam" id="3.30.420.40:FF:000004">
    <property type="entry name" value="Molecular chaperone DnaK"/>
    <property type="match status" value="1"/>
</dbReference>
<dbReference type="FunFam" id="3.90.640.10:FF:000003">
    <property type="entry name" value="Molecular chaperone DnaK"/>
    <property type="match status" value="1"/>
</dbReference>
<dbReference type="Gene3D" id="1.20.1270.10">
    <property type="match status" value="1"/>
</dbReference>
<dbReference type="Gene3D" id="3.30.420.40">
    <property type="match status" value="2"/>
</dbReference>
<dbReference type="Gene3D" id="3.90.640.10">
    <property type="entry name" value="Actin, Chain A, domain 4"/>
    <property type="match status" value="1"/>
</dbReference>
<dbReference type="Gene3D" id="2.60.34.10">
    <property type="entry name" value="Substrate Binding Domain Of DNAk, Chain A, domain 1"/>
    <property type="match status" value="1"/>
</dbReference>
<dbReference type="HAMAP" id="MF_00332">
    <property type="entry name" value="DnaK"/>
    <property type="match status" value="1"/>
</dbReference>
<dbReference type="InterPro" id="IPR043129">
    <property type="entry name" value="ATPase_NBD"/>
</dbReference>
<dbReference type="InterPro" id="IPR012725">
    <property type="entry name" value="Chaperone_DnaK"/>
</dbReference>
<dbReference type="InterPro" id="IPR018181">
    <property type="entry name" value="Heat_shock_70_CS"/>
</dbReference>
<dbReference type="InterPro" id="IPR029048">
    <property type="entry name" value="HSP70_C_sf"/>
</dbReference>
<dbReference type="InterPro" id="IPR029047">
    <property type="entry name" value="HSP70_peptide-bd_sf"/>
</dbReference>
<dbReference type="InterPro" id="IPR013126">
    <property type="entry name" value="Hsp_70_fam"/>
</dbReference>
<dbReference type="NCBIfam" id="NF001413">
    <property type="entry name" value="PRK00290.1"/>
    <property type="match status" value="1"/>
</dbReference>
<dbReference type="NCBIfam" id="NF003520">
    <property type="entry name" value="PRK05183.1"/>
    <property type="match status" value="1"/>
</dbReference>
<dbReference type="NCBIfam" id="TIGR02350">
    <property type="entry name" value="prok_dnaK"/>
    <property type="match status" value="1"/>
</dbReference>
<dbReference type="PANTHER" id="PTHR19375">
    <property type="entry name" value="HEAT SHOCK PROTEIN 70KDA"/>
    <property type="match status" value="1"/>
</dbReference>
<dbReference type="Pfam" id="PF00012">
    <property type="entry name" value="HSP70"/>
    <property type="match status" value="1"/>
</dbReference>
<dbReference type="PRINTS" id="PR00301">
    <property type="entry name" value="HEATSHOCK70"/>
</dbReference>
<dbReference type="SUPFAM" id="SSF53067">
    <property type="entry name" value="Actin-like ATPase domain"/>
    <property type="match status" value="2"/>
</dbReference>
<dbReference type="SUPFAM" id="SSF100934">
    <property type="entry name" value="Heat shock protein 70kD (HSP70), C-terminal subdomain"/>
    <property type="match status" value="1"/>
</dbReference>
<dbReference type="SUPFAM" id="SSF100920">
    <property type="entry name" value="Heat shock protein 70kD (HSP70), peptide-binding domain"/>
    <property type="match status" value="1"/>
</dbReference>
<dbReference type="PROSITE" id="PS00297">
    <property type="entry name" value="HSP70_1"/>
    <property type="match status" value="1"/>
</dbReference>
<dbReference type="PROSITE" id="PS00329">
    <property type="entry name" value="HSP70_2"/>
    <property type="match status" value="1"/>
</dbReference>
<dbReference type="PROSITE" id="PS01036">
    <property type="entry name" value="HSP70_3"/>
    <property type="match status" value="1"/>
</dbReference>
<proteinExistence type="inferred from homology"/>
<evidence type="ECO:0000255" key="1">
    <source>
        <dbReference type="HAMAP-Rule" id="MF_00332"/>
    </source>
</evidence>
<evidence type="ECO:0000256" key="2">
    <source>
        <dbReference type="SAM" id="MobiDB-lite"/>
    </source>
</evidence>
<organism>
    <name type="scientific">Yersinia pestis</name>
    <dbReference type="NCBI Taxonomy" id="632"/>
    <lineage>
        <taxon>Bacteria</taxon>
        <taxon>Pseudomonadati</taxon>
        <taxon>Pseudomonadota</taxon>
        <taxon>Gammaproteobacteria</taxon>
        <taxon>Enterobacterales</taxon>
        <taxon>Yersiniaceae</taxon>
        <taxon>Yersinia</taxon>
    </lineage>
</organism>
<accession>Q8ZIM7</accession>
<accession>Q0WJJ8</accession>
<protein>
    <recommendedName>
        <fullName evidence="1">Chaperone protein DnaK</fullName>
    </recommendedName>
    <alternativeName>
        <fullName evidence="1">HSP70</fullName>
    </alternativeName>
    <alternativeName>
        <fullName evidence="1">Heat shock 70 kDa protein</fullName>
    </alternativeName>
    <alternativeName>
        <fullName evidence="1">Heat shock protein 70</fullName>
    </alternativeName>
</protein>
<sequence length="636" mass="69025">MGKIIGIDLGTTNSCVAIMDGTKARVLENSEGDRTTPSIIAYTQDGETLVGQPAKRQAVTNPQNTLFAIKRLIGRRFQDEEAQRDKDIMPYKIIAADNGDAWLEVKGQKMAPPQISAEVLKKMKKTAEDYLGEPVTEAVITVPAYFNDAQRQATKDAGRIAGLEVKRIINEPTAAALAYGLDKEVGNRTIAVYDLGGGTFDISIIEIDEVDGEKTFEVLATNGDTHLGGEDFDSRLINYLVEEFKKDQGMDLRTDPLAMQRLKEAAEKAKIELSSAQQTDVNLPYITADGSGPKHMNIKVTRAKLESLVEDLVNRSIEPLKVALQDAGLSVSDIQDVILVGGQTRMPMVQKKVADFFGKEPRKDVNPDEAVAIGAAVQGGVLSGEVKDVLLLDVTPLSLGIETMGGVMTPLITKNTTIPTKHSQVFSTAEDNQSAVTIHVLQGERKRAQDNKSLGQFNLDGIQPAPRGMAQIEVTFDIDADGILHVSAKDKNTGREQKITIKASSGLNEEEIQKMVRDAEANAEADRKFEELVQTRNQADHLIHGTRKQLEEAGDKLPAEDKTAIEEAMKGLEAALKGEDKAEIEAKTQALVQVSGKLLEMAQQQQAAAGGDAGDTSAKKEDDVVDAEFEEVKDKK</sequence>